<gene>
    <name type="primary">CSTF3</name>
</gene>
<sequence length="717" mass="82922">MSGDGATEQAAEYVPEKVKKAEKKLEENPYDLDAWSILIREAQNQPIDKARKTYERLVAQFPSSGRFWKLYIEAEIKAKNYDKVEKLFQRCLMKVLHIDLWKCYLSYVRETKGKLPSYKEKMAQAYDFALDKIGMEIMSYQIWVDYINFLKGVEAVGSYAENQRITAVRRVYQRGCVNPMINIEQLWRDYNKYEEGINIHLAKKMIEDRSRDYMNARRVAKEYETVMKGLDRNAPSVPPQNTPQEAQQVDMWKKYIQWEKSNPLRTEDQTLITKRVMFAYEQCLLVLGHHPDIWYEAAQYLEQSSKLLAEKGDMNNAKLFSDEAANIYERAISTLLKKNMLLYFAYADYEESRMKYEKVHSIYNRLLAIEDIDPTLVYIQYMKFARRAEGIKSGRMIFKKAREDTRTRHHVYVTAALMEYYCSKDKSVAFKIFELGLKKYGDIPEYVLAYIDYLSHLNEDNNTRVLFERVLTSGSLPPEKSGEIWARFLAFESNIGDLASILKVEKRRFTAFKEEYEGKETALLVDRYKFMDLYPCSASELKALGYKDVSRAKLAAIIPDPVVAPSIVPVLKDEVDRKPEYPKPDTQQMIPFQPRHLAPPGLHPVPGGVFPVPPAAVVLMKLLPPPICFQGPFVQVDELMEIFRRCKIPNTVEEAVRIITGGAPELAVEGNGPVESNAVLTKAVKRPNEDSDEDEEKGAVVPPVHDIYRARQQKRIR</sequence>
<organism>
    <name type="scientific">Homo sapiens</name>
    <name type="common">Human</name>
    <dbReference type="NCBI Taxonomy" id="9606"/>
    <lineage>
        <taxon>Eukaryota</taxon>
        <taxon>Metazoa</taxon>
        <taxon>Chordata</taxon>
        <taxon>Craniata</taxon>
        <taxon>Vertebrata</taxon>
        <taxon>Euteleostomi</taxon>
        <taxon>Mammalia</taxon>
        <taxon>Eutheria</taxon>
        <taxon>Euarchontoglires</taxon>
        <taxon>Primates</taxon>
        <taxon>Haplorrhini</taxon>
        <taxon>Catarrhini</taxon>
        <taxon>Hominidae</taxon>
        <taxon>Homo</taxon>
    </lineage>
</organism>
<comment type="function">
    <text>One of the multiple factors required for polyadenylation and 3'-end cleavage of mammalian pre-mRNAs.</text>
</comment>
<comment type="subunit">
    <text evidence="2 3">Homodimer. The CSTF complex is composed of CSTF1 (50 kDa subunit), CSTF2 (64 kDa subunit) and CSTF3 (77 kDa subunit). CSTF3 directly interacts with CSTF1 and CSTF2. Interacts with FIP1L1.</text>
</comment>
<comment type="subcellular location">
    <subcellularLocation>
        <location>Nucleus</location>
    </subcellularLocation>
</comment>
<comment type="alternative products">
    <event type="alternative splicing"/>
    <isoform>
        <id>Q12996-1</id>
        <name>1</name>
        <sequence type="displayed"/>
    </isoform>
    <isoform>
        <id>Q12996-2</id>
        <name>2</name>
        <sequence type="described" ref="VSP_042731 VSP_042732"/>
    </isoform>
    <isoform>
        <id>Q12996-3</id>
        <name>3</name>
        <sequence type="described" ref="VSP_045675 VSP_045676"/>
    </isoform>
</comment>
<evidence type="ECO:0000256" key="1">
    <source>
        <dbReference type="SAM" id="MobiDB-lite"/>
    </source>
</evidence>
<evidence type="ECO:0000269" key="2">
    <source>
    </source>
</evidence>
<evidence type="ECO:0000269" key="3">
    <source>
    </source>
</evidence>
<evidence type="ECO:0000303" key="4">
    <source>
    </source>
</evidence>
<evidence type="ECO:0007744" key="5">
    <source>
    </source>
</evidence>
<evidence type="ECO:0007744" key="6">
    <source>
    </source>
</evidence>
<evidence type="ECO:0007744" key="7">
    <source>
    </source>
</evidence>
<evidence type="ECO:0007744" key="8">
    <source>
    </source>
</evidence>
<evidence type="ECO:0007744" key="9">
    <source>
    </source>
</evidence>
<evidence type="ECO:0007744" key="10">
    <source>
    </source>
</evidence>
<evidence type="ECO:0007744" key="11">
    <source>
    </source>
</evidence>
<evidence type="ECO:0007744" key="12">
    <source>
    </source>
</evidence>
<evidence type="ECO:0007744" key="13">
    <source>
    </source>
</evidence>
<evidence type="ECO:0007744" key="14">
    <source>
    </source>
</evidence>
<evidence type="ECO:0007744" key="15">
    <source>
    </source>
</evidence>
<evidence type="ECO:0007744" key="16">
    <source>
    </source>
</evidence>
<evidence type="ECO:0007829" key="17">
    <source>
        <dbReference type="PDB" id="6B3X"/>
    </source>
</evidence>
<evidence type="ECO:0007829" key="18">
    <source>
        <dbReference type="PDB" id="7ZY4"/>
    </source>
</evidence>
<feature type="initiator methionine" description="Removed" evidence="10 14">
    <location>
        <position position="1"/>
    </location>
</feature>
<feature type="chain" id="PRO_0000205722" description="Cleavage stimulation factor subunit 3">
    <location>
        <begin position="2"/>
        <end position="717"/>
    </location>
</feature>
<feature type="repeat" description="HAT 1">
    <location>
        <begin position="45"/>
        <end position="77"/>
    </location>
</feature>
<feature type="repeat" description="HAT 2">
    <location>
        <begin position="79"/>
        <end position="110"/>
    </location>
</feature>
<feature type="repeat" description="HAT 3">
    <location>
        <begin position="117"/>
        <end position="152"/>
    </location>
</feature>
<feature type="repeat" description="HAT 4">
    <location>
        <begin position="163"/>
        <end position="196"/>
    </location>
</feature>
<feature type="repeat" description="HAT 5">
    <location>
        <begin position="221"/>
        <end position="261"/>
    </location>
</feature>
<feature type="repeat" description="HAT 6">
    <location>
        <begin position="271"/>
        <end position="303"/>
    </location>
</feature>
<feature type="repeat" description="HAT 7">
    <location>
        <begin position="319"/>
        <end position="352"/>
    </location>
</feature>
<feature type="repeat" description="HAT 8">
    <location>
        <begin position="354"/>
        <end position="387"/>
    </location>
</feature>
<feature type="repeat" description="HAT 9">
    <location>
        <begin position="458"/>
        <end position="494"/>
    </location>
</feature>
<feature type="region of interest" description="Disordered" evidence="1">
    <location>
        <begin position="684"/>
        <end position="705"/>
    </location>
</feature>
<feature type="modified residue" description="N-acetylserine" evidence="10 14">
    <location>
        <position position="2"/>
    </location>
</feature>
<feature type="modified residue" description="Phosphoserine" evidence="5 6 7 8 9 11 12 13 15 16">
    <location>
        <position position="691"/>
    </location>
</feature>
<feature type="splice variant" id="VSP_045675" description="In isoform 3." evidence="4">
    <original>N</original>
    <variation>V</variation>
    <location>
        <position position="44"/>
    </location>
</feature>
<feature type="splice variant" id="VSP_045676" description="In isoform 3." evidence="4">
    <location>
        <begin position="45"/>
        <end position="717"/>
    </location>
</feature>
<feature type="splice variant" id="VSP_042731" description="In isoform 2." evidence="4">
    <original>IKAKNYDKVEKLFQRCLMKVLHIDLWKC</original>
    <variation>VTILFYFFLYQYCSIHCSDRKQVRNIAN</variation>
    <location>
        <begin position="76"/>
        <end position="103"/>
    </location>
</feature>
<feature type="splice variant" id="VSP_042732" description="In isoform 2." evidence="4">
    <location>
        <begin position="104"/>
        <end position="717"/>
    </location>
</feature>
<feature type="helix" evidence="18">
    <location>
        <begin position="245"/>
        <end position="260"/>
    </location>
</feature>
<feature type="helix" evidence="18">
    <location>
        <begin position="269"/>
        <end position="287"/>
    </location>
</feature>
<feature type="helix" evidence="18">
    <location>
        <begin position="291"/>
        <end position="310"/>
    </location>
</feature>
<feature type="helix" evidence="18">
    <location>
        <begin position="314"/>
        <end position="333"/>
    </location>
</feature>
<feature type="helix" evidence="18">
    <location>
        <begin position="340"/>
        <end position="352"/>
    </location>
</feature>
<feature type="helix" evidence="18">
    <location>
        <begin position="356"/>
        <end position="367"/>
    </location>
</feature>
<feature type="strand" evidence="18">
    <location>
        <begin position="370"/>
        <end position="372"/>
    </location>
</feature>
<feature type="helix" evidence="18">
    <location>
        <begin position="375"/>
        <end position="389"/>
    </location>
</feature>
<feature type="helix" evidence="18">
    <location>
        <begin position="391"/>
        <end position="402"/>
    </location>
</feature>
<feature type="helix" evidence="18">
    <location>
        <begin position="410"/>
        <end position="421"/>
    </location>
</feature>
<feature type="helix" evidence="18">
    <location>
        <begin position="426"/>
        <end position="440"/>
    </location>
</feature>
<feature type="helix" evidence="18">
    <location>
        <begin position="444"/>
        <end position="456"/>
    </location>
</feature>
<feature type="helix" evidence="18">
    <location>
        <begin position="460"/>
        <end position="472"/>
    </location>
</feature>
<feature type="strand" evidence="18">
    <location>
        <begin position="473"/>
        <end position="475"/>
    </location>
</feature>
<feature type="helix" evidence="18">
    <location>
        <begin position="478"/>
        <end position="480"/>
    </location>
</feature>
<feature type="helix" evidence="18">
    <location>
        <begin position="482"/>
        <end position="495"/>
    </location>
</feature>
<feature type="helix" evidence="18">
    <location>
        <begin position="498"/>
        <end position="511"/>
    </location>
</feature>
<feature type="turn" evidence="18">
    <location>
        <begin position="512"/>
        <end position="518"/>
    </location>
</feature>
<feature type="helix" evidence="18">
    <location>
        <begin position="520"/>
        <end position="528"/>
    </location>
</feature>
<feature type="helix" evidence="18">
    <location>
        <begin position="538"/>
        <end position="544"/>
    </location>
</feature>
<feature type="helix" evidence="17">
    <location>
        <begin position="586"/>
        <end position="588"/>
    </location>
</feature>
<feature type="strand" evidence="17">
    <location>
        <begin position="589"/>
        <end position="591"/>
    </location>
</feature>
<accession>Q12996</accession>
<accession>A8K471</accession>
<accession>D3DR04</accession>
<accession>E9PB40</accession>
<accession>Q32P22</accession>
<accession>Q96FQ8</accession>
<accession>Q96QD6</accession>
<accession>Q96QK4</accession>
<protein>
    <recommendedName>
        <fullName>Cleavage stimulation factor subunit 3</fullName>
    </recommendedName>
    <alternativeName>
        <fullName>CF-1 77 kDa subunit</fullName>
    </alternativeName>
    <alternativeName>
        <fullName>Cleavage stimulation factor 77 kDa subunit</fullName>
        <shortName>CSTF 77 kDa subunit</shortName>
        <shortName>CstF-77</shortName>
    </alternativeName>
</protein>
<proteinExistence type="evidence at protein level"/>
<dbReference type="EMBL" id="U15782">
    <property type="protein sequence ID" value="AAA61417.1"/>
    <property type="molecule type" value="mRNA"/>
</dbReference>
<dbReference type="EMBL" id="AK290836">
    <property type="protein sequence ID" value="BAF83525.1"/>
    <property type="molecule type" value="mRNA"/>
</dbReference>
<dbReference type="EMBL" id="AC131263">
    <property type="status" value="NOT_ANNOTATED_CDS"/>
    <property type="molecule type" value="Genomic_DNA"/>
</dbReference>
<dbReference type="EMBL" id="AL121926">
    <property type="protein sequence ID" value="CAC48252.1"/>
    <property type="molecule type" value="Genomic_DNA"/>
</dbReference>
<dbReference type="EMBL" id="CH471064">
    <property type="protein sequence ID" value="EAW68200.1"/>
    <property type="molecule type" value="Genomic_DNA"/>
</dbReference>
<dbReference type="EMBL" id="CH471064">
    <property type="protein sequence ID" value="EAW68201.1"/>
    <property type="molecule type" value="Genomic_DNA"/>
</dbReference>
<dbReference type="EMBL" id="CH471064">
    <property type="protein sequence ID" value="EAW68202.1"/>
    <property type="molecule type" value="Genomic_DNA"/>
</dbReference>
<dbReference type="EMBL" id="BC009792">
    <property type="protein sequence ID" value="AAH09792.1"/>
    <property type="molecule type" value="mRNA"/>
</dbReference>
<dbReference type="EMBL" id="BC010533">
    <property type="protein sequence ID" value="AAH10533.1"/>
    <property type="molecule type" value="mRNA"/>
</dbReference>
<dbReference type="EMBL" id="BC059948">
    <property type="protein sequence ID" value="AAH59948.1"/>
    <property type="molecule type" value="mRNA"/>
</dbReference>
<dbReference type="EMBL" id="BC108319">
    <property type="protein sequence ID" value="AAI08320.1"/>
    <property type="molecule type" value="mRNA"/>
</dbReference>
<dbReference type="EMBL" id="BM014288">
    <property type="status" value="NOT_ANNOTATED_CDS"/>
    <property type="molecule type" value="mRNA"/>
</dbReference>
<dbReference type="CCDS" id="CCDS44563.1">
    <molecule id="Q12996-2"/>
</dbReference>
<dbReference type="CCDS" id="CCDS44564.1">
    <molecule id="Q12996-3"/>
</dbReference>
<dbReference type="CCDS" id="CCDS7883.1">
    <molecule id="Q12996-1"/>
</dbReference>
<dbReference type="PIR" id="S50852">
    <property type="entry name" value="S50852"/>
</dbReference>
<dbReference type="RefSeq" id="NP_001028677.1">
    <molecule id="Q12996-2"/>
    <property type="nucleotide sequence ID" value="NM_001033505.2"/>
</dbReference>
<dbReference type="RefSeq" id="NP_001028678.1">
    <molecule id="Q12996-3"/>
    <property type="nucleotide sequence ID" value="NM_001033506.2"/>
</dbReference>
<dbReference type="RefSeq" id="NP_001317.1">
    <molecule id="Q12996-1"/>
    <property type="nucleotide sequence ID" value="NM_001326.3"/>
</dbReference>
<dbReference type="PDB" id="6B3X">
    <property type="method" value="X-ray"/>
    <property type="resolution" value="2.30 A"/>
    <property type="chains" value="B=581-600"/>
</dbReference>
<dbReference type="PDB" id="6URO">
    <property type="method" value="EM"/>
    <property type="resolution" value="3.60 A"/>
    <property type="chains" value="E/F=1-717"/>
</dbReference>
<dbReference type="PDB" id="7ZY4">
    <property type="method" value="X-ray"/>
    <property type="resolution" value="2.55 A"/>
    <property type="chains" value="A/B=241-549"/>
</dbReference>
<dbReference type="PDBsum" id="6B3X"/>
<dbReference type="PDBsum" id="6URO"/>
<dbReference type="PDBsum" id="7ZY4"/>
<dbReference type="EMDB" id="EMD-20861"/>
<dbReference type="SMR" id="Q12996"/>
<dbReference type="BioGRID" id="107861">
    <property type="interactions" value="156"/>
</dbReference>
<dbReference type="ComplexPortal" id="CPX-2701">
    <property type="entry name" value="Cleavage stimulation factor complex, CSTF2 variant"/>
</dbReference>
<dbReference type="ComplexPortal" id="CPX-2703">
    <property type="entry name" value="Cleavage stimulation factor complex, CSTF2T variant"/>
</dbReference>
<dbReference type="CORUM" id="Q12996"/>
<dbReference type="DIP" id="DIP-48674N"/>
<dbReference type="FunCoup" id="Q12996">
    <property type="interactions" value="4210"/>
</dbReference>
<dbReference type="IntAct" id="Q12996">
    <property type="interactions" value="52"/>
</dbReference>
<dbReference type="MINT" id="Q12996"/>
<dbReference type="STRING" id="9606.ENSP00000315791"/>
<dbReference type="GlyGen" id="Q12996">
    <property type="glycosylation" value="2 sites, 1 O-linked glycan (1 site)"/>
</dbReference>
<dbReference type="iPTMnet" id="Q12996"/>
<dbReference type="PhosphoSitePlus" id="Q12996"/>
<dbReference type="SwissPalm" id="Q12996"/>
<dbReference type="BioMuta" id="CSTF3"/>
<dbReference type="DMDM" id="71153231"/>
<dbReference type="jPOST" id="Q12996"/>
<dbReference type="MassIVE" id="Q12996"/>
<dbReference type="PaxDb" id="9606-ENSP00000315791"/>
<dbReference type="PeptideAtlas" id="Q12996"/>
<dbReference type="ProteomicsDB" id="19137"/>
<dbReference type="ProteomicsDB" id="59086">
    <molecule id="Q12996-1"/>
</dbReference>
<dbReference type="ProteomicsDB" id="59087">
    <molecule id="Q12996-2"/>
</dbReference>
<dbReference type="Pumba" id="Q12996"/>
<dbReference type="Antibodypedia" id="25689">
    <property type="antibodies" value="218 antibodies from 27 providers"/>
</dbReference>
<dbReference type="DNASU" id="1479"/>
<dbReference type="Ensembl" id="ENST00000323959.9">
    <molecule id="Q12996-1"/>
    <property type="protein sequence ID" value="ENSP00000315791.4"/>
    <property type="gene ID" value="ENSG00000176102.13"/>
</dbReference>
<dbReference type="Ensembl" id="ENST00000431742.2">
    <molecule id="Q12996-3"/>
    <property type="protein sequence ID" value="ENSP00000393064.2"/>
    <property type="gene ID" value="ENSG00000176102.13"/>
</dbReference>
<dbReference type="Ensembl" id="ENST00000438862.6">
    <molecule id="Q12996-2"/>
    <property type="protein sequence ID" value="ENSP00000388711.2"/>
    <property type="gene ID" value="ENSG00000176102.13"/>
</dbReference>
<dbReference type="GeneID" id="1479"/>
<dbReference type="KEGG" id="hsa:1479"/>
<dbReference type="MANE-Select" id="ENST00000323959.9">
    <property type="protein sequence ID" value="ENSP00000315791.4"/>
    <property type="RefSeq nucleotide sequence ID" value="NM_001326.3"/>
    <property type="RefSeq protein sequence ID" value="NP_001317.1"/>
</dbReference>
<dbReference type="UCSC" id="uc001muh.4">
    <molecule id="Q12996-1"/>
    <property type="organism name" value="human"/>
</dbReference>
<dbReference type="AGR" id="HGNC:2485"/>
<dbReference type="CTD" id="1479"/>
<dbReference type="DisGeNET" id="1479"/>
<dbReference type="GeneCards" id="CSTF3"/>
<dbReference type="HGNC" id="HGNC:2485">
    <property type="gene designation" value="CSTF3"/>
</dbReference>
<dbReference type="HPA" id="ENSG00000176102">
    <property type="expression patterns" value="Low tissue specificity"/>
</dbReference>
<dbReference type="MIM" id="600367">
    <property type="type" value="gene"/>
</dbReference>
<dbReference type="neXtProt" id="NX_Q12996"/>
<dbReference type="OpenTargets" id="ENSG00000176102"/>
<dbReference type="PharmGKB" id="PA26987"/>
<dbReference type="VEuPathDB" id="HostDB:ENSG00000176102"/>
<dbReference type="eggNOG" id="KOG1914">
    <property type="taxonomic scope" value="Eukaryota"/>
</dbReference>
<dbReference type="GeneTree" id="ENSGT00390000006758"/>
<dbReference type="HOGENOM" id="CLU_007630_3_1_1"/>
<dbReference type="InParanoid" id="Q12996"/>
<dbReference type="OMA" id="CFRGPFV"/>
<dbReference type="OrthoDB" id="26282at2759"/>
<dbReference type="PAN-GO" id="Q12996">
    <property type="GO annotations" value="3 GO annotations based on evolutionary models"/>
</dbReference>
<dbReference type="PhylomeDB" id="Q12996"/>
<dbReference type="TreeFam" id="TF105867"/>
<dbReference type="PathwayCommons" id="Q12996"/>
<dbReference type="Reactome" id="R-HSA-72187">
    <property type="pathway name" value="mRNA 3'-end processing"/>
</dbReference>
<dbReference type="Reactome" id="R-HSA-72203">
    <property type="pathway name" value="Processing of Capped Intron-Containing Pre-mRNA"/>
</dbReference>
<dbReference type="Reactome" id="R-HSA-73856">
    <property type="pathway name" value="RNA Polymerase II Transcription Termination"/>
</dbReference>
<dbReference type="Reactome" id="R-HSA-77595">
    <property type="pathway name" value="Processing of Intronless Pre-mRNAs"/>
</dbReference>
<dbReference type="SignaLink" id="Q12996"/>
<dbReference type="SIGNOR" id="Q12996"/>
<dbReference type="BioGRID-ORCS" id="1479">
    <property type="hits" value="799 hits in 1163 CRISPR screens"/>
</dbReference>
<dbReference type="ChiTaRS" id="CSTF3">
    <property type="organism name" value="human"/>
</dbReference>
<dbReference type="GeneWiki" id="CSTF3"/>
<dbReference type="GenomeRNAi" id="1479"/>
<dbReference type="Pharos" id="Q12996">
    <property type="development level" value="Tbio"/>
</dbReference>
<dbReference type="PRO" id="PR:Q12996"/>
<dbReference type="Proteomes" id="UP000005640">
    <property type="component" value="Chromosome 11"/>
</dbReference>
<dbReference type="RNAct" id="Q12996">
    <property type="molecule type" value="protein"/>
</dbReference>
<dbReference type="Bgee" id="ENSG00000176102">
    <property type="expression patterns" value="Expressed in adenohypophysis and 205 other cell types or tissues"/>
</dbReference>
<dbReference type="ExpressionAtlas" id="Q12996">
    <property type="expression patterns" value="baseline and differential"/>
</dbReference>
<dbReference type="GO" id="GO:0005848">
    <property type="term" value="C:mRNA cleavage stimulating factor complex"/>
    <property type="evidence" value="ECO:0000314"/>
    <property type="project" value="UniProtKB"/>
</dbReference>
<dbReference type="GO" id="GO:0005654">
    <property type="term" value="C:nucleoplasm"/>
    <property type="evidence" value="ECO:0000314"/>
    <property type="project" value="HPA"/>
</dbReference>
<dbReference type="GO" id="GO:0005634">
    <property type="term" value="C:nucleus"/>
    <property type="evidence" value="ECO:0000318"/>
    <property type="project" value="GO_Central"/>
</dbReference>
<dbReference type="GO" id="GO:0003729">
    <property type="term" value="F:mRNA binding"/>
    <property type="evidence" value="ECO:0000318"/>
    <property type="project" value="GO_Central"/>
</dbReference>
<dbReference type="GO" id="GO:0003723">
    <property type="term" value="F:RNA binding"/>
    <property type="evidence" value="ECO:0007005"/>
    <property type="project" value="UniProtKB"/>
</dbReference>
<dbReference type="GO" id="GO:0180010">
    <property type="term" value="P:co-transcriptional mRNA 3'-end processing, cleavage and polyadenylation pathway"/>
    <property type="evidence" value="ECO:0000314"/>
    <property type="project" value="UniProtKB"/>
</dbReference>
<dbReference type="GO" id="GO:0031123">
    <property type="term" value="P:RNA 3'-end processing"/>
    <property type="evidence" value="ECO:0000318"/>
    <property type="project" value="GO_Central"/>
</dbReference>
<dbReference type="FunFam" id="1.25.40.1040:FF:000002">
    <property type="entry name" value="Cleavage stimulation factor subunit 3"/>
    <property type="match status" value="1"/>
</dbReference>
<dbReference type="FunFam" id="1.25.40.10:FF:002655">
    <property type="entry name" value="Cleavage stimulation factor subunit 3"/>
    <property type="match status" value="1"/>
</dbReference>
<dbReference type="Gene3D" id="1.25.40.1040">
    <property type="match status" value="1"/>
</dbReference>
<dbReference type="InterPro" id="IPR003107">
    <property type="entry name" value="HAT"/>
</dbReference>
<dbReference type="InterPro" id="IPR045243">
    <property type="entry name" value="Rna14-like"/>
</dbReference>
<dbReference type="InterPro" id="IPR008847">
    <property type="entry name" value="Suf"/>
</dbReference>
<dbReference type="InterPro" id="IPR011990">
    <property type="entry name" value="TPR-like_helical_dom_sf"/>
</dbReference>
<dbReference type="PANTHER" id="PTHR19980:SF0">
    <property type="entry name" value="CLEAVAGE STIMULATION FACTOR SUBUNIT 3"/>
    <property type="match status" value="1"/>
</dbReference>
<dbReference type="PANTHER" id="PTHR19980">
    <property type="entry name" value="RNA CLEAVAGE STIMULATION FACTOR"/>
    <property type="match status" value="1"/>
</dbReference>
<dbReference type="Pfam" id="PF05843">
    <property type="entry name" value="Suf"/>
    <property type="match status" value="1"/>
</dbReference>
<dbReference type="SMART" id="SM00386">
    <property type="entry name" value="HAT"/>
    <property type="match status" value="10"/>
</dbReference>
<dbReference type="SUPFAM" id="SSF48452">
    <property type="entry name" value="TPR-like"/>
    <property type="match status" value="1"/>
</dbReference>
<keyword id="KW-0002">3D-structure</keyword>
<keyword id="KW-0007">Acetylation</keyword>
<keyword id="KW-0025">Alternative splicing</keyword>
<keyword id="KW-0507">mRNA processing</keyword>
<keyword id="KW-0539">Nucleus</keyword>
<keyword id="KW-0597">Phosphoprotein</keyword>
<keyword id="KW-1267">Proteomics identification</keyword>
<keyword id="KW-1185">Reference proteome</keyword>
<keyword id="KW-0677">Repeat</keyword>
<reference key="1">
    <citation type="journal article" date="1994" name="Nature">
        <title>A subunit of the polyadenylation factor CstF is the human homologue of the Drosophila suppressor of forked protein.</title>
        <authorList>
            <person name="Takagaki Y."/>
            <person name="Manley J.L."/>
        </authorList>
    </citation>
    <scope>NUCLEOTIDE SEQUENCE [MRNA] (ISOFORM 1)</scope>
    <source>
        <tissue>Placenta</tissue>
    </source>
</reference>
<reference key="2">
    <citation type="journal article" date="2004" name="Nat. Genet.">
        <title>Complete sequencing and characterization of 21,243 full-length human cDNAs.</title>
        <authorList>
            <person name="Ota T."/>
            <person name="Suzuki Y."/>
            <person name="Nishikawa T."/>
            <person name="Otsuki T."/>
            <person name="Sugiyama T."/>
            <person name="Irie R."/>
            <person name="Wakamatsu A."/>
            <person name="Hayashi K."/>
            <person name="Sato H."/>
            <person name="Nagai K."/>
            <person name="Kimura K."/>
            <person name="Makita H."/>
            <person name="Sekine M."/>
            <person name="Obayashi M."/>
            <person name="Nishi T."/>
            <person name="Shibahara T."/>
            <person name="Tanaka T."/>
            <person name="Ishii S."/>
            <person name="Yamamoto J."/>
            <person name="Saito K."/>
            <person name="Kawai Y."/>
            <person name="Isono Y."/>
            <person name="Nakamura Y."/>
            <person name="Nagahari K."/>
            <person name="Murakami K."/>
            <person name="Yasuda T."/>
            <person name="Iwayanagi T."/>
            <person name="Wagatsuma M."/>
            <person name="Shiratori A."/>
            <person name="Sudo H."/>
            <person name="Hosoiri T."/>
            <person name="Kaku Y."/>
            <person name="Kodaira H."/>
            <person name="Kondo H."/>
            <person name="Sugawara M."/>
            <person name="Takahashi M."/>
            <person name="Kanda K."/>
            <person name="Yokoi T."/>
            <person name="Furuya T."/>
            <person name="Kikkawa E."/>
            <person name="Omura Y."/>
            <person name="Abe K."/>
            <person name="Kamihara K."/>
            <person name="Katsuta N."/>
            <person name="Sato K."/>
            <person name="Tanikawa M."/>
            <person name="Yamazaki M."/>
            <person name="Ninomiya K."/>
            <person name="Ishibashi T."/>
            <person name="Yamashita H."/>
            <person name="Murakawa K."/>
            <person name="Fujimori K."/>
            <person name="Tanai H."/>
            <person name="Kimata M."/>
            <person name="Watanabe M."/>
            <person name="Hiraoka S."/>
            <person name="Chiba Y."/>
            <person name="Ishida S."/>
            <person name="Ono Y."/>
            <person name="Takiguchi S."/>
            <person name="Watanabe S."/>
            <person name="Yosida M."/>
            <person name="Hotuta T."/>
            <person name="Kusano J."/>
            <person name="Kanehori K."/>
            <person name="Takahashi-Fujii A."/>
            <person name="Hara H."/>
            <person name="Tanase T.-O."/>
            <person name="Nomura Y."/>
            <person name="Togiya S."/>
            <person name="Komai F."/>
            <person name="Hara R."/>
            <person name="Takeuchi K."/>
            <person name="Arita M."/>
            <person name="Imose N."/>
            <person name="Musashino K."/>
            <person name="Yuuki H."/>
            <person name="Oshima A."/>
            <person name="Sasaki N."/>
            <person name="Aotsuka S."/>
            <person name="Yoshikawa Y."/>
            <person name="Matsunawa H."/>
            <person name="Ichihara T."/>
            <person name="Shiohata N."/>
            <person name="Sano S."/>
            <person name="Moriya S."/>
            <person name="Momiyama H."/>
            <person name="Satoh N."/>
            <person name="Takami S."/>
            <person name="Terashima Y."/>
            <person name="Suzuki O."/>
            <person name="Nakagawa S."/>
            <person name="Senoh A."/>
            <person name="Mizoguchi H."/>
            <person name="Goto Y."/>
            <person name="Shimizu F."/>
            <person name="Wakebe H."/>
            <person name="Hishigaki H."/>
            <person name="Watanabe T."/>
            <person name="Sugiyama A."/>
            <person name="Takemoto M."/>
            <person name="Kawakami B."/>
            <person name="Yamazaki M."/>
            <person name="Watanabe K."/>
            <person name="Kumagai A."/>
            <person name="Itakura S."/>
            <person name="Fukuzumi Y."/>
            <person name="Fujimori Y."/>
            <person name="Komiyama M."/>
            <person name="Tashiro H."/>
            <person name="Tanigami A."/>
            <person name="Fujiwara T."/>
            <person name="Ono T."/>
            <person name="Yamada K."/>
            <person name="Fujii Y."/>
            <person name="Ozaki K."/>
            <person name="Hirao M."/>
            <person name="Ohmori Y."/>
            <person name="Kawabata A."/>
            <person name="Hikiji T."/>
            <person name="Kobatake N."/>
            <person name="Inagaki H."/>
            <person name="Ikema Y."/>
            <person name="Okamoto S."/>
            <person name="Okitani R."/>
            <person name="Kawakami T."/>
            <person name="Noguchi S."/>
            <person name="Itoh T."/>
            <person name="Shigeta K."/>
            <person name="Senba T."/>
            <person name="Matsumura K."/>
            <person name="Nakajima Y."/>
            <person name="Mizuno T."/>
            <person name="Morinaga M."/>
            <person name="Sasaki M."/>
            <person name="Togashi T."/>
            <person name="Oyama M."/>
            <person name="Hata H."/>
            <person name="Watanabe M."/>
            <person name="Komatsu T."/>
            <person name="Mizushima-Sugano J."/>
            <person name="Satoh T."/>
            <person name="Shirai Y."/>
            <person name="Takahashi Y."/>
            <person name="Nakagawa K."/>
            <person name="Okumura K."/>
            <person name="Nagase T."/>
            <person name="Nomura N."/>
            <person name="Kikuchi H."/>
            <person name="Masuho Y."/>
            <person name="Yamashita R."/>
            <person name="Nakai K."/>
            <person name="Yada T."/>
            <person name="Nakamura Y."/>
            <person name="Ohara O."/>
            <person name="Isogai T."/>
            <person name="Sugano S."/>
        </authorList>
    </citation>
    <scope>NUCLEOTIDE SEQUENCE [LARGE SCALE MRNA] (ISOFORM 1)</scope>
    <source>
        <tissue>Liver</tissue>
    </source>
</reference>
<reference key="3">
    <citation type="journal article" date="2006" name="Nature">
        <title>Human chromosome 11 DNA sequence and analysis including novel gene identification.</title>
        <authorList>
            <person name="Taylor T.D."/>
            <person name="Noguchi H."/>
            <person name="Totoki Y."/>
            <person name="Toyoda A."/>
            <person name="Kuroki Y."/>
            <person name="Dewar K."/>
            <person name="Lloyd C."/>
            <person name="Itoh T."/>
            <person name="Takeda T."/>
            <person name="Kim D.-W."/>
            <person name="She X."/>
            <person name="Barlow K.F."/>
            <person name="Bloom T."/>
            <person name="Bruford E."/>
            <person name="Chang J.L."/>
            <person name="Cuomo C.A."/>
            <person name="Eichler E."/>
            <person name="FitzGerald M.G."/>
            <person name="Jaffe D.B."/>
            <person name="LaButti K."/>
            <person name="Nicol R."/>
            <person name="Park H.-S."/>
            <person name="Seaman C."/>
            <person name="Sougnez C."/>
            <person name="Yang X."/>
            <person name="Zimmer A.R."/>
            <person name="Zody M.C."/>
            <person name="Birren B.W."/>
            <person name="Nusbaum C."/>
            <person name="Fujiyama A."/>
            <person name="Hattori M."/>
            <person name="Rogers J."/>
            <person name="Lander E.S."/>
            <person name="Sakaki Y."/>
        </authorList>
    </citation>
    <scope>NUCLEOTIDE SEQUENCE [LARGE SCALE GENOMIC DNA]</scope>
</reference>
<reference key="4">
    <citation type="submission" date="2005-09" db="EMBL/GenBank/DDBJ databases">
        <authorList>
            <person name="Mural R.J."/>
            <person name="Istrail S."/>
            <person name="Sutton G.G."/>
            <person name="Florea L."/>
            <person name="Halpern A.L."/>
            <person name="Mobarry C.M."/>
            <person name="Lippert R."/>
            <person name="Walenz B."/>
            <person name="Shatkay H."/>
            <person name="Dew I."/>
            <person name="Miller J.R."/>
            <person name="Flanigan M.J."/>
            <person name="Edwards N.J."/>
            <person name="Bolanos R."/>
            <person name="Fasulo D."/>
            <person name="Halldorsson B.V."/>
            <person name="Hannenhalli S."/>
            <person name="Turner R."/>
            <person name="Yooseph S."/>
            <person name="Lu F."/>
            <person name="Nusskern D.R."/>
            <person name="Shue B.C."/>
            <person name="Zheng X.H."/>
            <person name="Zhong F."/>
            <person name="Delcher A.L."/>
            <person name="Huson D.H."/>
            <person name="Kravitz S.A."/>
            <person name="Mouchard L."/>
            <person name="Reinert K."/>
            <person name="Remington K.A."/>
            <person name="Clark A.G."/>
            <person name="Waterman M.S."/>
            <person name="Eichler E.E."/>
            <person name="Adams M.D."/>
            <person name="Hunkapiller M.W."/>
            <person name="Myers E.W."/>
            <person name="Venter J.C."/>
        </authorList>
    </citation>
    <scope>NUCLEOTIDE SEQUENCE [LARGE SCALE GENOMIC DNA]</scope>
</reference>
<reference key="5">
    <citation type="journal article" date="2004" name="Genome Res.">
        <title>The status, quality, and expansion of the NIH full-length cDNA project: the Mammalian Gene Collection (MGC).</title>
        <authorList>
            <consortium name="The MGC Project Team"/>
        </authorList>
    </citation>
    <scope>NUCLEOTIDE SEQUENCE [LARGE SCALE MRNA] (ISOFORMS 1; 2 AND 3)</scope>
    <source>
        <tissue>Mammary carcinoma</tissue>
        <tissue>Placenta</tissue>
        <tissue>PNS</tissue>
        <tissue>Prostate</tissue>
        <tissue>Skin</tissue>
    </source>
</reference>
<reference key="6">
    <citation type="journal article" date="2000" name="Mol. Cell. Biol.">
        <title>Complex protein interactions within the human polyadenylation machinery identify a novel component.</title>
        <authorList>
            <person name="Takagaki Y."/>
            <person name="Manley J.L."/>
        </authorList>
    </citation>
    <scope>SUBUNIT</scope>
</reference>
<reference key="7">
    <citation type="journal article" date="2004" name="EMBO J.">
        <title>Human Fip1 is a subunit of CPSF that binds to U-rich RNA elements and stimulates poly(A) polymerase.</title>
        <authorList>
            <person name="Kaufmann I."/>
            <person name="Martin G."/>
            <person name="Friedlein A."/>
            <person name="Langen H."/>
            <person name="Keller W."/>
        </authorList>
    </citation>
    <scope>INTERACTION WITH FIP1L1</scope>
</reference>
<reference key="8">
    <citation type="journal article" date="2006" name="Cell">
        <title>Global, in vivo, and site-specific phosphorylation dynamics in signaling networks.</title>
        <authorList>
            <person name="Olsen J.V."/>
            <person name="Blagoev B."/>
            <person name="Gnad F."/>
            <person name="Macek B."/>
            <person name="Kumar C."/>
            <person name="Mortensen P."/>
            <person name="Mann M."/>
        </authorList>
    </citation>
    <scope>PHOSPHORYLATION [LARGE SCALE ANALYSIS] AT SER-691</scope>
    <scope>IDENTIFICATION BY MASS SPECTROMETRY [LARGE SCALE ANALYSIS]</scope>
    <source>
        <tissue>Cervix carcinoma</tissue>
    </source>
</reference>
<reference key="9">
    <citation type="journal article" date="2008" name="J. Proteome Res.">
        <title>Combining protein-based IMAC, peptide-based IMAC, and MudPIT for efficient phosphoproteomic analysis.</title>
        <authorList>
            <person name="Cantin G.T."/>
            <person name="Yi W."/>
            <person name="Lu B."/>
            <person name="Park S.K."/>
            <person name="Xu T."/>
            <person name="Lee J.-D."/>
            <person name="Yates J.R. III"/>
        </authorList>
    </citation>
    <scope>PHOSPHORYLATION [LARGE SCALE ANALYSIS] AT SER-691</scope>
    <scope>IDENTIFICATION BY MASS SPECTROMETRY [LARGE SCALE ANALYSIS]</scope>
    <source>
        <tissue>Cervix carcinoma</tissue>
    </source>
</reference>
<reference key="10">
    <citation type="journal article" date="2008" name="Mol. Cell">
        <title>Kinase-selective enrichment enables quantitative phosphoproteomics of the kinome across the cell cycle.</title>
        <authorList>
            <person name="Daub H."/>
            <person name="Olsen J.V."/>
            <person name="Bairlein M."/>
            <person name="Gnad F."/>
            <person name="Oppermann F.S."/>
            <person name="Korner R."/>
            <person name="Greff Z."/>
            <person name="Keri G."/>
            <person name="Stemmann O."/>
            <person name="Mann M."/>
        </authorList>
    </citation>
    <scope>PHOSPHORYLATION [LARGE SCALE ANALYSIS] AT SER-691</scope>
    <scope>IDENTIFICATION BY MASS SPECTROMETRY [LARGE SCALE ANALYSIS]</scope>
    <source>
        <tissue>Cervix carcinoma</tissue>
    </source>
</reference>
<reference key="11">
    <citation type="journal article" date="2008" name="Proc. Natl. Acad. Sci. U.S.A.">
        <title>A quantitative atlas of mitotic phosphorylation.</title>
        <authorList>
            <person name="Dephoure N."/>
            <person name="Zhou C."/>
            <person name="Villen J."/>
            <person name="Beausoleil S.A."/>
            <person name="Bakalarski C.E."/>
            <person name="Elledge S.J."/>
            <person name="Gygi S.P."/>
        </authorList>
    </citation>
    <scope>PHOSPHORYLATION [LARGE SCALE ANALYSIS] AT SER-691</scope>
    <scope>IDENTIFICATION BY MASS SPECTROMETRY [LARGE SCALE ANALYSIS]</scope>
    <source>
        <tissue>Cervix carcinoma</tissue>
    </source>
</reference>
<reference key="12">
    <citation type="journal article" date="2008" name="Proteomics">
        <title>Large-scale phosphoproteome analysis of human liver tissue by enrichment and fractionation of phosphopeptides with strong anion exchange chromatography.</title>
        <authorList>
            <person name="Han G."/>
            <person name="Ye M."/>
            <person name="Zhou H."/>
            <person name="Jiang X."/>
            <person name="Feng S."/>
            <person name="Jiang X."/>
            <person name="Tian R."/>
            <person name="Wan D."/>
            <person name="Zou H."/>
            <person name="Gu J."/>
        </authorList>
    </citation>
    <scope>PHOSPHORYLATION [LARGE SCALE ANALYSIS] AT SER-691</scope>
    <scope>IDENTIFICATION BY MASS SPECTROMETRY [LARGE SCALE ANALYSIS]</scope>
    <source>
        <tissue>Liver</tissue>
    </source>
</reference>
<reference key="13">
    <citation type="journal article" date="2009" name="Anal. Chem.">
        <title>Lys-N and trypsin cover complementary parts of the phosphoproteome in a refined SCX-based approach.</title>
        <authorList>
            <person name="Gauci S."/>
            <person name="Helbig A.O."/>
            <person name="Slijper M."/>
            <person name="Krijgsveld J."/>
            <person name="Heck A.J."/>
            <person name="Mohammed S."/>
        </authorList>
    </citation>
    <scope>ACETYLATION [LARGE SCALE ANALYSIS] AT SER-2</scope>
    <scope>CLEAVAGE OF INITIATOR METHIONINE [LARGE SCALE ANALYSIS]</scope>
    <scope>IDENTIFICATION BY MASS SPECTROMETRY [LARGE SCALE ANALYSIS]</scope>
</reference>
<reference key="14">
    <citation type="journal article" date="2009" name="Sci. Signal.">
        <title>Quantitative phosphoproteomic analysis of T cell receptor signaling reveals system-wide modulation of protein-protein interactions.</title>
        <authorList>
            <person name="Mayya V."/>
            <person name="Lundgren D.H."/>
            <person name="Hwang S.-I."/>
            <person name="Rezaul K."/>
            <person name="Wu L."/>
            <person name="Eng J.K."/>
            <person name="Rodionov V."/>
            <person name="Han D.K."/>
        </authorList>
    </citation>
    <scope>PHOSPHORYLATION [LARGE SCALE ANALYSIS] AT SER-691</scope>
    <scope>IDENTIFICATION BY MASS SPECTROMETRY [LARGE SCALE ANALYSIS]</scope>
    <source>
        <tissue>Leukemic T-cell</tissue>
    </source>
</reference>
<reference key="15">
    <citation type="journal article" date="2010" name="Sci. Signal.">
        <title>Quantitative phosphoproteomics reveals widespread full phosphorylation site occupancy during mitosis.</title>
        <authorList>
            <person name="Olsen J.V."/>
            <person name="Vermeulen M."/>
            <person name="Santamaria A."/>
            <person name="Kumar C."/>
            <person name="Miller M.L."/>
            <person name="Jensen L.J."/>
            <person name="Gnad F."/>
            <person name="Cox J."/>
            <person name="Jensen T.S."/>
            <person name="Nigg E.A."/>
            <person name="Brunak S."/>
            <person name="Mann M."/>
        </authorList>
    </citation>
    <scope>PHOSPHORYLATION [LARGE SCALE ANALYSIS] AT SER-691</scope>
    <scope>IDENTIFICATION BY MASS SPECTROMETRY [LARGE SCALE ANALYSIS]</scope>
    <source>
        <tissue>Cervix carcinoma</tissue>
    </source>
</reference>
<reference key="16">
    <citation type="journal article" date="2011" name="BMC Syst. Biol.">
        <title>Initial characterization of the human central proteome.</title>
        <authorList>
            <person name="Burkard T.R."/>
            <person name="Planyavsky M."/>
            <person name="Kaupe I."/>
            <person name="Breitwieser F.P."/>
            <person name="Buerckstuemmer T."/>
            <person name="Bennett K.L."/>
            <person name="Superti-Furga G."/>
            <person name="Colinge J."/>
        </authorList>
    </citation>
    <scope>IDENTIFICATION BY MASS SPECTROMETRY [LARGE SCALE ANALYSIS]</scope>
</reference>
<reference key="17">
    <citation type="journal article" date="2011" name="Sci. Signal.">
        <title>System-wide temporal characterization of the proteome and phosphoproteome of human embryonic stem cell differentiation.</title>
        <authorList>
            <person name="Rigbolt K.T."/>
            <person name="Prokhorova T.A."/>
            <person name="Akimov V."/>
            <person name="Henningsen J."/>
            <person name="Johansen P.T."/>
            <person name="Kratchmarova I."/>
            <person name="Kassem M."/>
            <person name="Mann M."/>
            <person name="Olsen J.V."/>
            <person name="Blagoev B."/>
        </authorList>
    </citation>
    <scope>PHOSPHORYLATION [LARGE SCALE ANALYSIS] AT SER-691</scope>
    <scope>IDENTIFICATION BY MASS SPECTROMETRY [LARGE SCALE ANALYSIS]</scope>
</reference>
<reference key="18">
    <citation type="journal article" date="2012" name="Mol. Cell. Proteomics">
        <title>Comparative large-scale characterisation of plant vs. mammal proteins reveals similar and idiosyncratic N-alpha acetylation features.</title>
        <authorList>
            <person name="Bienvenut W.V."/>
            <person name="Sumpton D."/>
            <person name="Martinez A."/>
            <person name="Lilla S."/>
            <person name="Espagne C."/>
            <person name="Meinnel T."/>
            <person name="Giglione C."/>
        </authorList>
    </citation>
    <scope>ACETYLATION [LARGE SCALE ANALYSIS] AT SER-2</scope>
    <scope>CLEAVAGE OF INITIATOR METHIONINE [LARGE SCALE ANALYSIS]</scope>
    <scope>IDENTIFICATION BY MASS SPECTROMETRY [LARGE SCALE ANALYSIS]</scope>
</reference>
<reference key="19">
    <citation type="journal article" date="2013" name="J. Proteome Res.">
        <title>Toward a comprehensive characterization of a human cancer cell phosphoproteome.</title>
        <authorList>
            <person name="Zhou H."/>
            <person name="Di Palma S."/>
            <person name="Preisinger C."/>
            <person name="Peng M."/>
            <person name="Polat A.N."/>
            <person name="Heck A.J."/>
            <person name="Mohammed S."/>
        </authorList>
    </citation>
    <scope>PHOSPHORYLATION [LARGE SCALE ANALYSIS] AT SER-691</scope>
    <scope>IDENTIFICATION BY MASS SPECTROMETRY [LARGE SCALE ANALYSIS]</scope>
    <source>
        <tissue>Cervix carcinoma</tissue>
        <tissue>Erythroleukemia</tissue>
    </source>
</reference>
<reference key="20">
    <citation type="journal article" date="2014" name="J. Proteomics">
        <title>An enzyme assisted RP-RPLC approach for in-depth analysis of human liver phosphoproteome.</title>
        <authorList>
            <person name="Bian Y."/>
            <person name="Song C."/>
            <person name="Cheng K."/>
            <person name="Dong M."/>
            <person name="Wang F."/>
            <person name="Huang J."/>
            <person name="Sun D."/>
            <person name="Wang L."/>
            <person name="Ye M."/>
            <person name="Zou H."/>
        </authorList>
    </citation>
    <scope>PHOSPHORYLATION [LARGE SCALE ANALYSIS] AT SER-691</scope>
    <scope>IDENTIFICATION BY MASS SPECTROMETRY [LARGE SCALE ANALYSIS]</scope>
    <source>
        <tissue>Liver</tissue>
    </source>
</reference>
<name>CSTF3_HUMAN</name>